<sequence>MSVATGDKPVNSRQEILEGARRCFAEHGYEGATVRRLEEATGKSRGAIFHHFGDKEKLFLALAREDAARMAETVSENGLVEVMRGMLEDPERYDWLSIRLEISKQLRTDPEFRAKWTDHQSVLDEAVRVRLARNADKGRMRTDVPIEVLHLYLETVMDGFISRLATGASTEGLSEVLDLVETSVRRPD</sequence>
<name>ACNR_COREF</name>
<organism>
    <name type="scientific">Corynebacterium efficiens (strain DSM 44549 / YS-314 / AJ 12310 / JCM 11189 / NBRC 100395)</name>
    <dbReference type="NCBI Taxonomy" id="196164"/>
    <lineage>
        <taxon>Bacteria</taxon>
        <taxon>Bacillati</taxon>
        <taxon>Actinomycetota</taxon>
        <taxon>Actinomycetes</taxon>
        <taxon>Mycobacteriales</taxon>
        <taxon>Corynebacteriaceae</taxon>
        <taxon>Corynebacterium</taxon>
    </lineage>
</organism>
<protein>
    <recommendedName>
        <fullName evidence="1">HTH-type transcriptional repressor AcnR</fullName>
    </recommendedName>
</protein>
<proteinExistence type="inferred from homology"/>
<comment type="function">
    <text evidence="1">AcnR negatively controls the expression of the aconitase gene acn.</text>
</comment>
<comment type="subunit">
    <text evidence="1">Homodimer.</text>
</comment>
<dbReference type="EMBL" id="BA000035">
    <property type="protein sequence ID" value="BAC18473.1"/>
    <property type="molecule type" value="Genomic_DNA"/>
</dbReference>
<dbReference type="RefSeq" id="WP_006767665.1">
    <property type="nucleotide sequence ID" value="NC_004369.1"/>
</dbReference>
<dbReference type="SMR" id="Q8FTA6"/>
<dbReference type="STRING" id="196164.gene:10742084"/>
<dbReference type="KEGG" id="cef:CE1663"/>
<dbReference type="eggNOG" id="COG1309">
    <property type="taxonomic scope" value="Bacteria"/>
</dbReference>
<dbReference type="HOGENOM" id="CLU_069356_15_12_11"/>
<dbReference type="OrthoDB" id="5816932at2"/>
<dbReference type="Proteomes" id="UP000001409">
    <property type="component" value="Chromosome"/>
</dbReference>
<dbReference type="GO" id="GO:0003677">
    <property type="term" value="F:DNA binding"/>
    <property type="evidence" value="ECO:0000250"/>
    <property type="project" value="UniProtKB"/>
</dbReference>
<dbReference type="GO" id="GO:0003700">
    <property type="term" value="F:DNA-binding transcription factor activity"/>
    <property type="evidence" value="ECO:0007669"/>
    <property type="project" value="TreeGrafter"/>
</dbReference>
<dbReference type="GO" id="GO:0000287">
    <property type="term" value="F:magnesium ion binding"/>
    <property type="evidence" value="ECO:0000250"/>
    <property type="project" value="UniProtKB"/>
</dbReference>
<dbReference type="GO" id="GO:0000976">
    <property type="term" value="F:transcription cis-regulatory region binding"/>
    <property type="evidence" value="ECO:0007669"/>
    <property type="project" value="TreeGrafter"/>
</dbReference>
<dbReference type="GO" id="GO:0006355">
    <property type="term" value="P:regulation of DNA-templated transcription"/>
    <property type="evidence" value="ECO:0000250"/>
    <property type="project" value="UniProtKB"/>
</dbReference>
<dbReference type="FunFam" id="1.10.357.10:FF:000013">
    <property type="entry name" value="TetR family transcriptional regulator"/>
    <property type="match status" value="1"/>
</dbReference>
<dbReference type="Gene3D" id="1.10.357.10">
    <property type="entry name" value="Tetracycline Repressor, domain 2"/>
    <property type="match status" value="1"/>
</dbReference>
<dbReference type="InterPro" id="IPR009057">
    <property type="entry name" value="Homeodomain-like_sf"/>
</dbReference>
<dbReference type="InterPro" id="IPR050109">
    <property type="entry name" value="HTH-type_TetR-like_transc_reg"/>
</dbReference>
<dbReference type="InterPro" id="IPR001647">
    <property type="entry name" value="HTH_TetR"/>
</dbReference>
<dbReference type="InterPro" id="IPR036271">
    <property type="entry name" value="Tet_transcr_reg_TetR-rel_C_sf"/>
</dbReference>
<dbReference type="PANTHER" id="PTHR30055">
    <property type="entry name" value="HTH-TYPE TRANSCRIPTIONAL REGULATOR RUTR"/>
    <property type="match status" value="1"/>
</dbReference>
<dbReference type="PANTHER" id="PTHR30055:SF229">
    <property type="entry name" value="HTH-TYPE TRANSCRIPTIONAL REPRESSOR RV1474C"/>
    <property type="match status" value="1"/>
</dbReference>
<dbReference type="Pfam" id="PF00440">
    <property type="entry name" value="TetR_N"/>
    <property type="match status" value="1"/>
</dbReference>
<dbReference type="PRINTS" id="PR00455">
    <property type="entry name" value="HTHTETR"/>
</dbReference>
<dbReference type="SUPFAM" id="SSF46689">
    <property type="entry name" value="Homeodomain-like"/>
    <property type="match status" value="1"/>
</dbReference>
<dbReference type="SUPFAM" id="SSF48498">
    <property type="entry name" value="Tetracyclin repressor-like, C-terminal domain"/>
    <property type="match status" value="1"/>
</dbReference>
<dbReference type="PROSITE" id="PS50977">
    <property type="entry name" value="HTH_TETR_2"/>
    <property type="match status" value="1"/>
</dbReference>
<evidence type="ECO:0000250" key="1">
    <source>
        <dbReference type="UniProtKB" id="Q8NQ97"/>
    </source>
</evidence>
<evidence type="ECO:0000255" key="2">
    <source>
        <dbReference type="PROSITE-ProRule" id="PRU00335"/>
    </source>
</evidence>
<reference key="1">
    <citation type="journal article" date="2003" name="Genome Res.">
        <title>Comparative complete genome sequence analysis of the amino acid replacements responsible for the thermostability of Corynebacterium efficiens.</title>
        <authorList>
            <person name="Nishio Y."/>
            <person name="Nakamura Y."/>
            <person name="Kawarabayasi Y."/>
            <person name="Usuda Y."/>
            <person name="Kimura E."/>
            <person name="Sugimoto S."/>
            <person name="Matsui K."/>
            <person name="Yamagishi A."/>
            <person name="Kikuchi H."/>
            <person name="Ikeo K."/>
            <person name="Gojobori T."/>
        </authorList>
    </citation>
    <scope>NUCLEOTIDE SEQUENCE [LARGE SCALE GENOMIC DNA]</scope>
    <source>
        <strain>DSM 44549 / YS-314 / AJ 12310 / JCM 11189 / NBRC 100395</strain>
    </source>
</reference>
<keyword id="KW-0238">DNA-binding</keyword>
<keyword id="KW-0460">Magnesium</keyword>
<keyword id="KW-0479">Metal-binding</keyword>
<keyword id="KW-1185">Reference proteome</keyword>
<keyword id="KW-0678">Repressor</keyword>
<keyword id="KW-0804">Transcription</keyword>
<keyword id="KW-0805">Transcription regulation</keyword>
<accession>Q8FTA6</accession>
<gene>
    <name evidence="1" type="primary">acnR</name>
    <name type="ordered locus">CE1663</name>
</gene>
<feature type="chain" id="PRO_0000070570" description="HTH-type transcriptional repressor AcnR">
    <location>
        <begin position="1"/>
        <end position="188"/>
    </location>
</feature>
<feature type="domain" description="HTH tetR-type" evidence="2">
    <location>
        <begin position="10"/>
        <end position="70"/>
    </location>
</feature>
<feature type="DNA-binding region" description="H-T-H motif" evidence="2">
    <location>
        <begin position="33"/>
        <end position="52"/>
    </location>
</feature>
<feature type="binding site" evidence="1">
    <location>
        <begin position="79"/>
        <end position="80"/>
    </location>
    <ligand>
        <name>citrate</name>
        <dbReference type="ChEBI" id="CHEBI:16947"/>
    </ligand>
</feature>
<feature type="binding site" evidence="1">
    <location>
        <position position="130"/>
    </location>
    <ligand>
        <name>citrate</name>
        <dbReference type="ChEBI" id="CHEBI:16947"/>
    </ligand>
</feature>
<feature type="binding site" evidence="1">
    <location>
        <position position="134"/>
    </location>
    <ligand>
        <name>citrate</name>
        <dbReference type="ChEBI" id="CHEBI:16947"/>
    </ligand>
</feature>
<feature type="binding site" evidence="1">
    <location>
        <position position="181"/>
    </location>
    <ligand>
        <name>Mg(2+)</name>
        <dbReference type="ChEBI" id="CHEBI:18420"/>
    </ligand>
</feature>
<feature type="binding site" evidence="1">
    <location>
        <position position="185"/>
    </location>
    <ligand>
        <name>citrate</name>
        <dbReference type="ChEBI" id="CHEBI:16947"/>
    </ligand>
</feature>